<accession>A1RKK6</accession>
<dbReference type="EC" id="1.4.3.5" evidence="1"/>
<dbReference type="EMBL" id="CP000503">
    <property type="protein sequence ID" value="ABM25201.1"/>
    <property type="molecule type" value="Genomic_DNA"/>
</dbReference>
<dbReference type="RefSeq" id="WP_011789666.1">
    <property type="nucleotide sequence ID" value="NC_008750.1"/>
</dbReference>
<dbReference type="SMR" id="A1RKK6"/>
<dbReference type="KEGG" id="shw:Sputw3181_2377"/>
<dbReference type="HOGENOM" id="CLU_032263_2_2_6"/>
<dbReference type="UniPathway" id="UPA01068">
    <property type="reaction ID" value="UER00304"/>
</dbReference>
<dbReference type="UniPathway" id="UPA01068">
    <property type="reaction ID" value="UER00305"/>
</dbReference>
<dbReference type="Proteomes" id="UP000002597">
    <property type="component" value="Chromosome"/>
</dbReference>
<dbReference type="GO" id="GO:0010181">
    <property type="term" value="F:FMN binding"/>
    <property type="evidence" value="ECO:0007669"/>
    <property type="project" value="UniProtKB-UniRule"/>
</dbReference>
<dbReference type="GO" id="GO:0004733">
    <property type="term" value="F:pyridoxamine phosphate oxidase activity"/>
    <property type="evidence" value="ECO:0007669"/>
    <property type="project" value="UniProtKB-UniRule"/>
</dbReference>
<dbReference type="GO" id="GO:0008615">
    <property type="term" value="P:pyridoxine biosynthetic process"/>
    <property type="evidence" value="ECO:0007669"/>
    <property type="project" value="UniProtKB-KW"/>
</dbReference>
<dbReference type="FunFam" id="2.30.110.10:FF:000001">
    <property type="entry name" value="Pyridoxine/pyridoxamine 5'-phosphate oxidase"/>
    <property type="match status" value="1"/>
</dbReference>
<dbReference type="Gene3D" id="2.30.110.10">
    <property type="entry name" value="Electron Transport, Fmn-binding Protein, Chain A"/>
    <property type="match status" value="1"/>
</dbReference>
<dbReference type="HAMAP" id="MF_01629">
    <property type="entry name" value="PdxH"/>
    <property type="match status" value="1"/>
</dbReference>
<dbReference type="InterPro" id="IPR000659">
    <property type="entry name" value="Pyridox_Oxase"/>
</dbReference>
<dbReference type="InterPro" id="IPR019740">
    <property type="entry name" value="Pyridox_Oxase_CS"/>
</dbReference>
<dbReference type="InterPro" id="IPR011576">
    <property type="entry name" value="Pyridox_Oxase_N"/>
</dbReference>
<dbReference type="InterPro" id="IPR019576">
    <property type="entry name" value="Pyridoxamine_oxidase_dimer_C"/>
</dbReference>
<dbReference type="InterPro" id="IPR012349">
    <property type="entry name" value="Split_barrel_FMN-bd"/>
</dbReference>
<dbReference type="NCBIfam" id="TIGR00558">
    <property type="entry name" value="pdxH"/>
    <property type="match status" value="1"/>
</dbReference>
<dbReference type="NCBIfam" id="NF004231">
    <property type="entry name" value="PRK05679.1"/>
    <property type="match status" value="1"/>
</dbReference>
<dbReference type="PANTHER" id="PTHR10851:SF0">
    <property type="entry name" value="PYRIDOXINE-5'-PHOSPHATE OXIDASE"/>
    <property type="match status" value="1"/>
</dbReference>
<dbReference type="PANTHER" id="PTHR10851">
    <property type="entry name" value="PYRIDOXINE-5-PHOSPHATE OXIDASE"/>
    <property type="match status" value="1"/>
</dbReference>
<dbReference type="Pfam" id="PF10590">
    <property type="entry name" value="PNP_phzG_C"/>
    <property type="match status" value="1"/>
</dbReference>
<dbReference type="Pfam" id="PF01243">
    <property type="entry name" value="PNPOx_N"/>
    <property type="match status" value="1"/>
</dbReference>
<dbReference type="PIRSF" id="PIRSF000190">
    <property type="entry name" value="Pyd_amn-ph_oxd"/>
    <property type="match status" value="1"/>
</dbReference>
<dbReference type="SUPFAM" id="SSF50475">
    <property type="entry name" value="FMN-binding split barrel"/>
    <property type="match status" value="1"/>
</dbReference>
<dbReference type="PROSITE" id="PS01064">
    <property type="entry name" value="PYRIDOX_OXIDASE"/>
    <property type="match status" value="1"/>
</dbReference>
<protein>
    <recommendedName>
        <fullName evidence="1">Pyridoxine/pyridoxamine 5'-phosphate oxidase</fullName>
        <ecNumber evidence="1">1.4.3.5</ecNumber>
    </recommendedName>
    <alternativeName>
        <fullName evidence="1">PNP/PMP oxidase</fullName>
        <shortName evidence="1">PNPOx</shortName>
    </alternativeName>
    <alternativeName>
        <fullName evidence="1">Pyridoxal 5'-phosphate synthase</fullName>
    </alternativeName>
</protein>
<sequence length="212" mass="24354">MTDLSDIRREYAKGGLRRADLPQNPMDLFALWMTQARDAELSDPTAMCVATVDEQGQPFQRIVLLKRFDDTGFVFFTNLGSRKAQQIAANNKVSLHFPWHPLERQVSVLGEAQALSTTEVLKYFMTRPKDSQIAAWVSQQSSKLSARQVLEGKFFEMKAKFAKGDVPLPSFWGGYLVRPKSIEFWQGGEHRLHDRFIYTRDNTQWIIDRLAP</sequence>
<organism>
    <name type="scientific">Shewanella sp. (strain W3-18-1)</name>
    <dbReference type="NCBI Taxonomy" id="351745"/>
    <lineage>
        <taxon>Bacteria</taxon>
        <taxon>Pseudomonadati</taxon>
        <taxon>Pseudomonadota</taxon>
        <taxon>Gammaproteobacteria</taxon>
        <taxon>Alteromonadales</taxon>
        <taxon>Shewanellaceae</taxon>
        <taxon>Shewanella</taxon>
    </lineage>
</organism>
<comment type="function">
    <text evidence="1">Catalyzes the oxidation of either pyridoxine 5'-phosphate (PNP) or pyridoxamine 5'-phosphate (PMP) into pyridoxal 5'-phosphate (PLP).</text>
</comment>
<comment type="catalytic activity">
    <reaction evidence="1">
        <text>pyridoxamine 5'-phosphate + O2 + H2O = pyridoxal 5'-phosphate + H2O2 + NH4(+)</text>
        <dbReference type="Rhea" id="RHEA:15817"/>
        <dbReference type="ChEBI" id="CHEBI:15377"/>
        <dbReference type="ChEBI" id="CHEBI:15379"/>
        <dbReference type="ChEBI" id="CHEBI:16240"/>
        <dbReference type="ChEBI" id="CHEBI:28938"/>
        <dbReference type="ChEBI" id="CHEBI:58451"/>
        <dbReference type="ChEBI" id="CHEBI:597326"/>
        <dbReference type="EC" id="1.4.3.5"/>
    </reaction>
</comment>
<comment type="catalytic activity">
    <reaction evidence="1">
        <text>pyridoxine 5'-phosphate + O2 = pyridoxal 5'-phosphate + H2O2</text>
        <dbReference type="Rhea" id="RHEA:15149"/>
        <dbReference type="ChEBI" id="CHEBI:15379"/>
        <dbReference type="ChEBI" id="CHEBI:16240"/>
        <dbReference type="ChEBI" id="CHEBI:58589"/>
        <dbReference type="ChEBI" id="CHEBI:597326"/>
        <dbReference type="EC" id="1.4.3.5"/>
    </reaction>
</comment>
<comment type="cofactor">
    <cofactor evidence="1">
        <name>FMN</name>
        <dbReference type="ChEBI" id="CHEBI:58210"/>
    </cofactor>
    <text evidence="1">Binds 1 FMN per subunit.</text>
</comment>
<comment type="pathway">
    <text evidence="1">Cofactor metabolism; pyridoxal 5'-phosphate salvage; pyridoxal 5'-phosphate from pyridoxamine 5'-phosphate: step 1/1.</text>
</comment>
<comment type="pathway">
    <text evidence="1">Cofactor metabolism; pyridoxal 5'-phosphate salvage; pyridoxal 5'-phosphate from pyridoxine 5'-phosphate: step 1/1.</text>
</comment>
<comment type="subunit">
    <text evidence="1">Homodimer.</text>
</comment>
<comment type="similarity">
    <text evidence="1">Belongs to the pyridoxamine 5'-phosphate oxidase family.</text>
</comment>
<name>PDXH_SHESW</name>
<feature type="chain" id="PRO_0000292332" description="Pyridoxine/pyridoxamine 5'-phosphate oxidase">
    <location>
        <begin position="1"/>
        <end position="212"/>
    </location>
</feature>
<feature type="binding site" evidence="1">
    <location>
        <begin position="8"/>
        <end position="11"/>
    </location>
    <ligand>
        <name>substrate</name>
    </ligand>
</feature>
<feature type="binding site" evidence="1">
    <location>
        <begin position="61"/>
        <end position="66"/>
    </location>
    <ligand>
        <name>FMN</name>
        <dbReference type="ChEBI" id="CHEBI:58210"/>
    </ligand>
</feature>
<feature type="binding site" evidence="1">
    <location>
        <position position="66"/>
    </location>
    <ligand>
        <name>substrate</name>
    </ligand>
</feature>
<feature type="binding site" evidence="1">
    <location>
        <begin position="76"/>
        <end position="77"/>
    </location>
    <ligand>
        <name>FMN</name>
        <dbReference type="ChEBI" id="CHEBI:58210"/>
    </ligand>
</feature>
<feature type="binding site" evidence="1">
    <location>
        <position position="82"/>
    </location>
    <ligand>
        <name>FMN</name>
        <dbReference type="ChEBI" id="CHEBI:58210"/>
    </ligand>
</feature>
<feature type="binding site" evidence="1">
    <location>
        <position position="83"/>
    </location>
    <ligand>
        <name>FMN</name>
        <dbReference type="ChEBI" id="CHEBI:58210"/>
    </ligand>
</feature>
<feature type="binding site" evidence="1">
    <location>
        <position position="105"/>
    </location>
    <ligand>
        <name>FMN</name>
        <dbReference type="ChEBI" id="CHEBI:58210"/>
    </ligand>
</feature>
<feature type="binding site" evidence="1">
    <location>
        <position position="123"/>
    </location>
    <ligand>
        <name>substrate</name>
    </ligand>
</feature>
<feature type="binding site" evidence="1">
    <location>
        <position position="127"/>
    </location>
    <ligand>
        <name>substrate</name>
    </ligand>
</feature>
<feature type="binding site" evidence="1">
    <location>
        <position position="131"/>
    </location>
    <ligand>
        <name>substrate</name>
    </ligand>
</feature>
<feature type="binding site" evidence="1">
    <location>
        <begin position="140"/>
        <end position="141"/>
    </location>
    <ligand>
        <name>FMN</name>
        <dbReference type="ChEBI" id="CHEBI:58210"/>
    </ligand>
</feature>
<feature type="binding site" evidence="1">
    <location>
        <position position="185"/>
    </location>
    <ligand>
        <name>FMN</name>
        <dbReference type="ChEBI" id="CHEBI:58210"/>
    </ligand>
</feature>
<feature type="binding site" evidence="1">
    <location>
        <begin position="191"/>
        <end position="193"/>
    </location>
    <ligand>
        <name>substrate</name>
    </ligand>
</feature>
<feature type="binding site" evidence="1">
    <location>
        <position position="195"/>
    </location>
    <ligand>
        <name>FMN</name>
        <dbReference type="ChEBI" id="CHEBI:58210"/>
    </ligand>
</feature>
<evidence type="ECO:0000255" key="1">
    <source>
        <dbReference type="HAMAP-Rule" id="MF_01629"/>
    </source>
</evidence>
<reference key="1">
    <citation type="submission" date="2006-12" db="EMBL/GenBank/DDBJ databases">
        <title>Complete sequence of Shewanella sp. W3-18-1.</title>
        <authorList>
            <consortium name="US DOE Joint Genome Institute"/>
            <person name="Copeland A."/>
            <person name="Lucas S."/>
            <person name="Lapidus A."/>
            <person name="Barry K."/>
            <person name="Detter J.C."/>
            <person name="Glavina del Rio T."/>
            <person name="Hammon N."/>
            <person name="Israni S."/>
            <person name="Dalin E."/>
            <person name="Tice H."/>
            <person name="Pitluck S."/>
            <person name="Chain P."/>
            <person name="Malfatti S."/>
            <person name="Shin M."/>
            <person name="Vergez L."/>
            <person name="Schmutz J."/>
            <person name="Larimer F."/>
            <person name="Land M."/>
            <person name="Hauser L."/>
            <person name="Kyrpides N."/>
            <person name="Lykidis A."/>
            <person name="Tiedje J."/>
            <person name="Richardson P."/>
        </authorList>
    </citation>
    <scope>NUCLEOTIDE SEQUENCE [LARGE SCALE GENOMIC DNA]</scope>
    <source>
        <strain>W3-18-1</strain>
    </source>
</reference>
<gene>
    <name evidence="1" type="primary">pdxH</name>
    <name type="ordered locus">Sputw3181_2377</name>
</gene>
<keyword id="KW-0285">Flavoprotein</keyword>
<keyword id="KW-0288">FMN</keyword>
<keyword id="KW-0560">Oxidoreductase</keyword>
<keyword id="KW-0664">Pyridoxine biosynthesis</keyword>
<proteinExistence type="inferred from homology"/>